<name>RL27_TOLAT</name>
<evidence type="ECO:0000255" key="1">
    <source>
        <dbReference type="HAMAP-Rule" id="MF_00539"/>
    </source>
</evidence>
<evidence type="ECO:0000256" key="2">
    <source>
        <dbReference type="SAM" id="MobiDB-lite"/>
    </source>
</evidence>
<evidence type="ECO:0000305" key="3"/>
<sequence>MAHKKAGGSSRNGRDSESKRLGVKRFGGESVLAGSIIVRQRGTKFHAGVNVGCGKDHTLFATATGTIKFEVKGPNNRKFVSIVAE</sequence>
<dbReference type="EMBL" id="CP001616">
    <property type="protein sequence ID" value="ACQ93975.1"/>
    <property type="molecule type" value="Genomic_DNA"/>
</dbReference>
<dbReference type="RefSeq" id="WP_015879443.1">
    <property type="nucleotide sequence ID" value="NC_012691.1"/>
</dbReference>
<dbReference type="SMR" id="C4L9M2"/>
<dbReference type="STRING" id="595494.Tola_2378"/>
<dbReference type="KEGG" id="tau:Tola_2378"/>
<dbReference type="eggNOG" id="COG0211">
    <property type="taxonomic scope" value="Bacteria"/>
</dbReference>
<dbReference type="HOGENOM" id="CLU_095424_4_1_6"/>
<dbReference type="OrthoDB" id="9803474at2"/>
<dbReference type="Proteomes" id="UP000009073">
    <property type="component" value="Chromosome"/>
</dbReference>
<dbReference type="GO" id="GO:0022625">
    <property type="term" value="C:cytosolic large ribosomal subunit"/>
    <property type="evidence" value="ECO:0007669"/>
    <property type="project" value="TreeGrafter"/>
</dbReference>
<dbReference type="GO" id="GO:0003735">
    <property type="term" value="F:structural constituent of ribosome"/>
    <property type="evidence" value="ECO:0007669"/>
    <property type="project" value="InterPro"/>
</dbReference>
<dbReference type="GO" id="GO:0006412">
    <property type="term" value="P:translation"/>
    <property type="evidence" value="ECO:0007669"/>
    <property type="project" value="UniProtKB-UniRule"/>
</dbReference>
<dbReference type="FunFam" id="2.40.50.100:FF:000001">
    <property type="entry name" value="50S ribosomal protein L27"/>
    <property type="match status" value="1"/>
</dbReference>
<dbReference type="Gene3D" id="2.40.50.100">
    <property type="match status" value="1"/>
</dbReference>
<dbReference type="HAMAP" id="MF_00539">
    <property type="entry name" value="Ribosomal_bL27"/>
    <property type="match status" value="1"/>
</dbReference>
<dbReference type="InterPro" id="IPR001684">
    <property type="entry name" value="Ribosomal_bL27"/>
</dbReference>
<dbReference type="InterPro" id="IPR018261">
    <property type="entry name" value="Ribosomal_bL27_CS"/>
</dbReference>
<dbReference type="NCBIfam" id="TIGR00062">
    <property type="entry name" value="L27"/>
    <property type="match status" value="1"/>
</dbReference>
<dbReference type="PANTHER" id="PTHR15893:SF0">
    <property type="entry name" value="LARGE RIBOSOMAL SUBUNIT PROTEIN BL27M"/>
    <property type="match status" value="1"/>
</dbReference>
<dbReference type="PANTHER" id="PTHR15893">
    <property type="entry name" value="RIBOSOMAL PROTEIN L27"/>
    <property type="match status" value="1"/>
</dbReference>
<dbReference type="Pfam" id="PF01016">
    <property type="entry name" value="Ribosomal_L27"/>
    <property type="match status" value="1"/>
</dbReference>
<dbReference type="PRINTS" id="PR00063">
    <property type="entry name" value="RIBOSOMALL27"/>
</dbReference>
<dbReference type="SUPFAM" id="SSF110324">
    <property type="entry name" value="Ribosomal L27 protein-like"/>
    <property type="match status" value="1"/>
</dbReference>
<dbReference type="PROSITE" id="PS00831">
    <property type="entry name" value="RIBOSOMAL_L27"/>
    <property type="match status" value="1"/>
</dbReference>
<accession>C4L9M2</accession>
<reference key="1">
    <citation type="submission" date="2009-05" db="EMBL/GenBank/DDBJ databases">
        <title>Complete sequence of Tolumonas auensis DSM 9187.</title>
        <authorList>
            <consortium name="US DOE Joint Genome Institute"/>
            <person name="Lucas S."/>
            <person name="Copeland A."/>
            <person name="Lapidus A."/>
            <person name="Glavina del Rio T."/>
            <person name="Tice H."/>
            <person name="Bruce D."/>
            <person name="Goodwin L."/>
            <person name="Pitluck S."/>
            <person name="Chertkov O."/>
            <person name="Brettin T."/>
            <person name="Detter J.C."/>
            <person name="Han C."/>
            <person name="Larimer F."/>
            <person name="Land M."/>
            <person name="Hauser L."/>
            <person name="Kyrpides N."/>
            <person name="Mikhailova N."/>
            <person name="Spring S."/>
            <person name="Beller H."/>
        </authorList>
    </citation>
    <scope>NUCLEOTIDE SEQUENCE [LARGE SCALE GENOMIC DNA]</scope>
    <source>
        <strain>DSM 9187 / NBRC 110442 / TA 4</strain>
    </source>
</reference>
<protein>
    <recommendedName>
        <fullName evidence="1">Large ribosomal subunit protein bL27</fullName>
    </recommendedName>
    <alternativeName>
        <fullName evidence="3">50S ribosomal protein L27</fullName>
    </alternativeName>
</protein>
<keyword id="KW-1185">Reference proteome</keyword>
<keyword id="KW-0687">Ribonucleoprotein</keyword>
<keyword id="KW-0689">Ribosomal protein</keyword>
<proteinExistence type="inferred from homology"/>
<feature type="chain" id="PRO_1000211943" description="Large ribosomal subunit protein bL27">
    <location>
        <begin position="1"/>
        <end position="85"/>
    </location>
</feature>
<feature type="region of interest" description="Disordered" evidence="2">
    <location>
        <begin position="1"/>
        <end position="22"/>
    </location>
</feature>
<comment type="similarity">
    <text evidence="1">Belongs to the bacterial ribosomal protein bL27 family.</text>
</comment>
<organism>
    <name type="scientific">Tolumonas auensis (strain DSM 9187 / NBRC 110442 / TA 4)</name>
    <dbReference type="NCBI Taxonomy" id="595494"/>
    <lineage>
        <taxon>Bacteria</taxon>
        <taxon>Pseudomonadati</taxon>
        <taxon>Pseudomonadota</taxon>
        <taxon>Gammaproteobacteria</taxon>
        <taxon>Aeromonadales</taxon>
        <taxon>Aeromonadaceae</taxon>
        <taxon>Tolumonas</taxon>
    </lineage>
</organism>
<gene>
    <name evidence="1" type="primary">rpmA</name>
    <name type="ordered locus">Tola_2378</name>
</gene>